<dbReference type="EMBL" id="AM774415">
    <property type="protein sequence ID" value="CAP14240.1"/>
    <property type="molecule type" value="Genomic_DNA"/>
</dbReference>
<dbReference type="RefSeq" id="WP_010903249.1">
    <property type="nucleotide sequence ID" value="NC_010364.1"/>
</dbReference>
<dbReference type="SMR" id="B0R671"/>
<dbReference type="EnsemblBacteria" id="CAP14240">
    <property type="protein sequence ID" value="CAP14240"/>
    <property type="gene ID" value="OE_3410F"/>
</dbReference>
<dbReference type="KEGG" id="hsl:OE_3410F"/>
<dbReference type="HOGENOM" id="CLU_098428_1_1_2"/>
<dbReference type="PhylomeDB" id="B0R671"/>
<dbReference type="Proteomes" id="UP000001321">
    <property type="component" value="Chromosome"/>
</dbReference>
<dbReference type="GO" id="GO:1990904">
    <property type="term" value="C:ribonucleoprotein complex"/>
    <property type="evidence" value="ECO:0007669"/>
    <property type="project" value="UniProtKB-KW"/>
</dbReference>
<dbReference type="GO" id="GO:0005840">
    <property type="term" value="C:ribosome"/>
    <property type="evidence" value="ECO:0007669"/>
    <property type="project" value="UniProtKB-KW"/>
</dbReference>
<dbReference type="GO" id="GO:0019843">
    <property type="term" value="F:rRNA binding"/>
    <property type="evidence" value="ECO:0007669"/>
    <property type="project" value="UniProtKB-UniRule"/>
</dbReference>
<dbReference type="GO" id="GO:0003735">
    <property type="term" value="F:structural constituent of ribosome"/>
    <property type="evidence" value="ECO:0007669"/>
    <property type="project" value="InterPro"/>
</dbReference>
<dbReference type="GO" id="GO:0006412">
    <property type="term" value="P:translation"/>
    <property type="evidence" value="ECO:0007669"/>
    <property type="project" value="UniProtKB-UniRule"/>
</dbReference>
<dbReference type="FunFam" id="3.30.1490.10:FF:000002">
    <property type="entry name" value="40S ribosomal protein S15a"/>
    <property type="match status" value="1"/>
</dbReference>
<dbReference type="Gene3D" id="3.30.1370.30">
    <property type="match status" value="1"/>
</dbReference>
<dbReference type="Gene3D" id="3.30.1490.10">
    <property type="match status" value="1"/>
</dbReference>
<dbReference type="HAMAP" id="MF_01302_A">
    <property type="entry name" value="Ribosomal_uS8_A"/>
    <property type="match status" value="1"/>
</dbReference>
<dbReference type="InterPro" id="IPR000630">
    <property type="entry name" value="Ribosomal_uS8"/>
</dbReference>
<dbReference type="InterPro" id="IPR047863">
    <property type="entry name" value="Ribosomal_uS8_CS"/>
</dbReference>
<dbReference type="InterPro" id="IPR035987">
    <property type="entry name" value="Ribosomal_uS8_sf"/>
</dbReference>
<dbReference type="NCBIfam" id="NF003115">
    <property type="entry name" value="PRK04034.1"/>
    <property type="match status" value="1"/>
</dbReference>
<dbReference type="PANTHER" id="PTHR11758">
    <property type="entry name" value="40S RIBOSOMAL PROTEIN S15A"/>
    <property type="match status" value="1"/>
</dbReference>
<dbReference type="Pfam" id="PF00410">
    <property type="entry name" value="Ribosomal_S8"/>
    <property type="match status" value="1"/>
</dbReference>
<dbReference type="SUPFAM" id="SSF56047">
    <property type="entry name" value="Ribosomal protein S8"/>
    <property type="match status" value="1"/>
</dbReference>
<dbReference type="PROSITE" id="PS00053">
    <property type="entry name" value="RIBOSOMAL_S8"/>
    <property type="match status" value="1"/>
</dbReference>
<evidence type="ECO:0000255" key="1">
    <source>
        <dbReference type="HAMAP-Rule" id="MF_01302"/>
    </source>
</evidence>
<evidence type="ECO:0000305" key="2"/>
<protein>
    <recommendedName>
        <fullName evidence="1">Small ribosomal subunit protein uS8</fullName>
    </recommendedName>
    <alternativeName>
        <fullName evidence="2">30S ribosomal protein S8</fullName>
    </alternativeName>
</protein>
<reference key="1">
    <citation type="journal article" date="2008" name="Genomics">
        <title>Evolution in the laboratory: the genome of Halobacterium salinarum strain R1 compared to that of strain NRC-1.</title>
        <authorList>
            <person name="Pfeiffer F."/>
            <person name="Schuster S.C."/>
            <person name="Broicher A."/>
            <person name="Falb M."/>
            <person name="Palm P."/>
            <person name="Rodewald K."/>
            <person name="Ruepp A."/>
            <person name="Soppa J."/>
            <person name="Tittor J."/>
            <person name="Oesterhelt D."/>
        </authorList>
    </citation>
    <scope>NUCLEOTIDE SEQUENCE [LARGE SCALE GENOMIC DNA]</scope>
    <source>
        <strain>ATCC 29341 / DSM 671 / R1</strain>
    </source>
</reference>
<keyword id="KW-0687">Ribonucleoprotein</keyword>
<keyword id="KW-0689">Ribosomal protein</keyword>
<keyword id="KW-0694">RNA-binding</keyword>
<keyword id="KW-0699">rRNA-binding</keyword>
<comment type="function">
    <text evidence="1">One of the primary rRNA binding proteins, it binds directly to 16S rRNA central domain where it helps coordinate assembly of the platform of the 30S subunit.</text>
</comment>
<comment type="subunit">
    <text evidence="1">Part of the 30S ribosomal subunit.</text>
</comment>
<comment type="similarity">
    <text evidence="1">Belongs to the universal ribosomal protein uS8 family.</text>
</comment>
<gene>
    <name evidence="1" type="primary">rps8</name>
    <name type="ordered locus">OE_3410F</name>
</gene>
<proteinExistence type="inferred from homology"/>
<sequence length="130" mass="14066">MTANDPLSDALSGIDNAESVGHLTHTVAPASNMVGSVLEVFYDRGYIDGFEFVDNGKAGRFEVELKGAINECGPVNPRYSVGADGFEQWEKRYLPARDYGSLVVTTSHGIMSHYEAREAGIGGQVIAYVY</sequence>
<name>RS8_HALS3</name>
<accession>B0R671</accession>
<feature type="chain" id="PRO_1000140563" description="Small ribosomal subunit protein uS8">
    <location>
        <begin position="1"/>
        <end position="130"/>
    </location>
</feature>
<organism>
    <name type="scientific">Halobacterium salinarum (strain ATCC 29341 / DSM 671 / R1)</name>
    <dbReference type="NCBI Taxonomy" id="478009"/>
    <lineage>
        <taxon>Archaea</taxon>
        <taxon>Methanobacteriati</taxon>
        <taxon>Methanobacteriota</taxon>
        <taxon>Stenosarchaea group</taxon>
        <taxon>Halobacteria</taxon>
        <taxon>Halobacteriales</taxon>
        <taxon>Halobacteriaceae</taxon>
        <taxon>Halobacterium</taxon>
        <taxon>Halobacterium salinarum NRC-34001</taxon>
    </lineage>
</organism>